<sequence>MDNLRETFLSLEDGLGSSDSPGLLSSWDWKDRAGPFELNQASPSQSLSPAPSLESYSSSPCPAVAGLPCEHGGASSGGSEGCSVGGASGLVEVDYNMLAFQPTHLQGGGGPKAQKGTKVRMSVQRRRKASEREKLRMRTLADALHTLRNYLPPVYSQRGQPLTKIQTLKYTIKYIGELTDLLNRGREPRAQSA</sequence>
<gene>
    <name type="primary">MSGN1</name>
</gene>
<evidence type="ECO:0000250" key="1"/>
<evidence type="ECO:0000255" key="2">
    <source>
        <dbReference type="PROSITE-ProRule" id="PRU00981"/>
    </source>
</evidence>
<evidence type="ECO:0000256" key="3">
    <source>
        <dbReference type="SAM" id="MobiDB-lite"/>
    </source>
</evidence>
<name>MSGN1_HUMAN</name>
<reference key="1">
    <citation type="journal article" date="2005" name="Nature">
        <title>Generation and annotation of the DNA sequences of human chromosomes 2 and 4.</title>
        <authorList>
            <person name="Hillier L.W."/>
            <person name="Graves T.A."/>
            <person name="Fulton R.S."/>
            <person name="Fulton L.A."/>
            <person name="Pepin K.H."/>
            <person name="Minx P."/>
            <person name="Wagner-McPherson C."/>
            <person name="Layman D."/>
            <person name="Wylie K."/>
            <person name="Sekhon M."/>
            <person name="Becker M.C."/>
            <person name="Fewell G.A."/>
            <person name="Delehaunty K.D."/>
            <person name="Miner T.L."/>
            <person name="Nash W.E."/>
            <person name="Kremitzki C."/>
            <person name="Oddy L."/>
            <person name="Du H."/>
            <person name="Sun H."/>
            <person name="Bradshaw-Cordum H."/>
            <person name="Ali J."/>
            <person name="Carter J."/>
            <person name="Cordes M."/>
            <person name="Harris A."/>
            <person name="Isak A."/>
            <person name="van Brunt A."/>
            <person name="Nguyen C."/>
            <person name="Du F."/>
            <person name="Courtney L."/>
            <person name="Kalicki J."/>
            <person name="Ozersky P."/>
            <person name="Abbott S."/>
            <person name="Armstrong J."/>
            <person name="Belter E.A."/>
            <person name="Caruso L."/>
            <person name="Cedroni M."/>
            <person name="Cotton M."/>
            <person name="Davidson T."/>
            <person name="Desai A."/>
            <person name="Elliott G."/>
            <person name="Erb T."/>
            <person name="Fronick C."/>
            <person name="Gaige T."/>
            <person name="Haakenson W."/>
            <person name="Haglund K."/>
            <person name="Holmes A."/>
            <person name="Harkins R."/>
            <person name="Kim K."/>
            <person name="Kruchowski S.S."/>
            <person name="Strong C.M."/>
            <person name="Grewal N."/>
            <person name="Goyea E."/>
            <person name="Hou S."/>
            <person name="Levy A."/>
            <person name="Martinka S."/>
            <person name="Mead K."/>
            <person name="McLellan M.D."/>
            <person name="Meyer R."/>
            <person name="Randall-Maher J."/>
            <person name="Tomlinson C."/>
            <person name="Dauphin-Kohlberg S."/>
            <person name="Kozlowicz-Reilly A."/>
            <person name="Shah N."/>
            <person name="Swearengen-Shahid S."/>
            <person name="Snider J."/>
            <person name="Strong J.T."/>
            <person name="Thompson J."/>
            <person name="Yoakum M."/>
            <person name="Leonard S."/>
            <person name="Pearman C."/>
            <person name="Trani L."/>
            <person name="Radionenko M."/>
            <person name="Waligorski J.E."/>
            <person name="Wang C."/>
            <person name="Rock S.M."/>
            <person name="Tin-Wollam A.-M."/>
            <person name="Maupin R."/>
            <person name="Latreille P."/>
            <person name="Wendl M.C."/>
            <person name="Yang S.-P."/>
            <person name="Pohl C."/>
            <person name="Wallis J.W."/>
            <person name="Spieth J."/>
            <person name="Bieri T.A."/>
            <person name="Berkowicz N."/>
            <person name="Nelson J.O."/>
            <person name="Osborne J."/>
            <person name="Ding L."/>
            <person name="Meyer R."/>
            <person name="Sabo A."/>
            <person name="Shotland Y."/>
            <person name="Sinha P."/>
            <person name="Wohldmann P.E."/>
            <person name="Cook L.L."/>
            <person name="Hickenbotham M.T."/>
            <person name="Eldred J."/>
            <person name="Williams D."/>
            <person name="Jones T.A."/>
            <person name="She X."/>
            <person name="Ciccarelli F.D."/>
            <person name="Izaurralde E."/>
            <person name="Taylor J."/>
            <person name="Schmutz J."/>
            <person name="Myers R.M."/>
            <person name="Cox D.R."/>
            <person name="Huang X."/>
            <person name="McPherson J.D."/>
            <person name="Mardis E.R."/>
            <person name="Clifton S.W."/>
            <person name="Warren W.C."/>
            <person name="Chinwalla A.T."/>
            <person name="Eddy S.R."/>
            <person name="Marra M.A."/>
            <person name="Ovcharenko I."/>
            <person name="Furey T.S."/>
            <person name="Miller W."/>
            <person name="Eichler E.E."/>
            <person name="Bork P."/>
            <person name="Suyama M."/>
            <person name="Torrents D."/>
            <person name="Waterston R.H."/>
            <person name="Wilson R.K."/>
        </authorList>
    </citation>
    <scope>NUCLEOTIDE SEQUENCE [LARGE SCALE GENOMIC DNA]</scope>
</reference>
<dbReference type="EMBL" id="AC093731">
    <property type="status" value="NOT_ANNOTATED_CDS"/>
    <property type="molecule type" value="Genomic_DNA"/>
</dbReference>
<dbReference type="CCDS" id="CCDS42657.1"/>
<dbReference type="RefSeq" id="NP_001099039.1">
    <property type="nucleotide sequence ID" value="NM_001105569.3"/>
</dbReference>
<dbReference type="SMR" id="A6NI15"/>
<dbReference type="BioGRID" id="131280">
    <property type="interactions" value="40"/>
</dbReference>
<dbReference type="FunCoup" id="A6NI15">
    <property type="interactions" value="684"/>
</dbReference>
<dbReference type="IntAct" id="A6NI15">
    <property type="interactions" value="32"/>
</dbReference>
<dbReference type="STRING" id="9606.ENSP00000281047"/>
<dbReference type="PhosphoSitePlus" id="A6NI15"/>
<dbReference type="BioMuta" id="MSGN1"/>
<dbReference type="MassIVE" id="A6NI15"/>
<dbReference type="PaxDb" id="9606-ENSP00000281047"/>
<dbReference type="Antibodypedia" id="64308">
    <property type="antibodies" value="65 antibodies from 12 providers"/>
</dbReference>
<dbReference type="DNASU" id="343930"/>
<dbReference type="Ensembl" id="ENST00000281047.4">
    <property type="protein sequence ID" value="ENSP00000281047.3"/>
    <property type="gene ID" value="ENSG00000151379.4"/>
</dbReference>
<dbReference type="GeneID" id="343930"/>
<dbReference type="KEGG" id="hsa:343930"/>
<dbReference type="MANE-Select" id="ENST00000281047.4">
    <property type="protein sequence ID" value="ENSP00000281047.3"/>
    <property type="RefSeq nucleotide sequence ID" value="NM_001105569.3"/>
    <property type="RefSeq protein sequence ID" value="NP_001099039.1"/>
</dbReference>
<dbReference type="UCSC" id="uc010yjt.3">
    <property type="organism name" value="human"/>
</dbReference>
<dbReference type="AGR" id="HGNC:14907"/>
<dbReference type="CTD" id="343930"/>
<dbReference type="DisGeNET" id="343930"/>
<dbReference type="GeneCards" id="MSGN1"/>
<dbReference type="HGNC" id="HGNC:14907">
    <property type="gene designation" value="MSGN1"/>
</dbReference>
<dbReference type="HPA" id="ENSG00000151379">
    <property type="expression patterns" value="Tissue enriched (choroid)"/>
</dbReference>
<dbReference type="MIM" id="612209">
    <property type="type" value="gene"/>
</dbReference>
<dbReference type="neXtProt" id="NX_A6NI15"/>
<dbReference type="OpenTargets" id="ENSG00000151379"/>
<dbReference type="PharmGKB" id="PA142671315"/>
<dbReference type="VEuPathDB" id="HostDB:ENSG00000151379"/>
<dbReference type="eggNOG" id="KOG4029">
    <property type="taxonomic scope" value="Eukaryota"/>
</dbReference>
<dbReference type="GeneTree" id="ENSGT00530000063712"/>
<dbReference type="HOGENOM" id="CLU_084234_1_0_1"/>
<dbReference type="InParanoid" id="A6NI15"/>
<dbReference type="OMA" id="SSWDWKN"/>
<dbReference type="OrthoDB" id="10063280at2759"/>
<dbReference type="PAN-GO" id="A6NI15">
    <property type="GO annotations" value="5 GO annotations based on evolutionary models"/>
</dbReference>
<dbReference type="PhylomeDB" id="A6NI15"/>
<dbReference type="TreeFam" id="TF325707"/>
<dbReference type="PathwayCommons" id="A6NI15"/>
<dbReference type="Reactome" id="R-HSA-9793380">
    <property type="pathway name" value="Formation of paraxial mesoderm"/>
</dbReference>
<dbReference type="Reactome" id="R-HSA-9824272">
    <property type="pathway name" value="Somitogenesis"/>
</dbReference>
<dbReference type="SignaLink" id="A6NI15"/>
<dbReference type="BioGRID-ORCS" id="343930">
    <property type="hits" value="3 hits in 1159 CRISPR screens"/>
</dbReference>
<dbReference type="GenomeRNAi" id="343930"/>
<dbReference type="Pharos" id="A6NI15">
    <property type="development level" value="Tbio"/>
</dbReference>
<dbReference type="PRO" id="PR:A6NI15"/>
<dbReference type="Proteomes" id="UP000005640">
    <property type="component" value="Chromosome 2"/>
</dbReference>
<dbReference type="RNAct" id="A6NI15">
    <property type="molecule type" value="protein"/>
</dbReference>
<dbReference type="Bgee" id="ENSG00000151379">
    <property type="expression patterns" value="Expressed in bone marrow cell and 9 other cell types or tissues"/>
</dbReference>
<dbReference type="GO" id="GO:0000785">
    <property type="term" value="C:chromatin"/>
    <property type="evidence" value="ECO:0000247"/>
    <property type="project" value="NTNU_SB"/>
</dbReference>
<dbReference type="GO" id="GO:0005634">
    <property type="term" value="C:nucleus"/>
    <property type="evidence" value="ECO:0000318"/>
    <property type="project" value="GO_Central"/>
</dbReference>
<dbReference type="GO" id="GO:0003682">
    <property type="term" value="F:chromatin binding"/>
    <property type="evidence" value="ECO:0007669"/>
    <property type="project" value="Ensembl"/>
</dbReference>
<dbReference type="GO" id="GO:0001228">
    <property type="term" value="F:DNA-binding transcription activator activity, RNA polymerase II-specific"/>
    <property type="evidence" value="ECO:0007669"/>
    <property type="project" value="Ensembl"/>
</dbReference>
<dbReference type="GO" id="GO:0000981">
    <property type="term" value="F:DNA-binding transcription factor activity, RNA polymerase II-specific"/>
    <property type="evidence" value="ECO:0000247"/>
    <property type="project" value="NTNU_SB"/>
</dbReference>
<dbReference type="GO" id="GO:0046983">
    <property type="term" value="F:protein dimerization activity"/>
    <property type="evidence" value="ECO:0007669"/>
    <property type="project" value="InterPro"/>
</dbReference>
<dbReference type="GO" id="GO:0000978">
    <property type="term" value="F:RNA polymerase II cis-regulatory region sequence-specific DNA binding"/>
    <property type="evidence" value="ECO:0000318"/>
    <property type="project" value="GO_Central"/>
</dbReference>
<dbReference type="GO" id="GO:1990837">
    <property type="term" value="F:sequence-specific double-stranded DNA binding"/>
    <property type="evidence" value="ECO:0000314"/>
    <property type="project" value="ARUK-UCL"/>
</dbReference>
<dbReference type="GO" id="GO:0030154">
    <property type="term" value="P:cell differentiation"/>
    <property type="evidence" value="ECO:0007669"/>
    <property type="project" value="UniProtKB-KW"/>
</dbReference>
<dbReference type="GO" id="GO:0001707">
    <property type="term" value="P:mesoderm formation"/>
    <property type="evidence" value="ECO:0000318"/>
    <property type="project" value="GO_Central"/>
</dbReference>
<dbReference type="GO" id="GO:0006357">
    <property type="term" value="P:regulation of transcription by RNA polymerase II"/>
    <property type="evidence" value="ECO:0000318"/>
    <property type="project" value="GO_Central"/>
</dbReference>
<dbReference type="GO" id="GO:0007379">
    <property type="term" value="P:segment specification"/>
    <property type="evidence" value="ECO:0007669"/>
    <property type="project" value="Ensembl"/>
</dbReference>
<dbReference type="GO" id="GO:0001756">
    <property type="term" value="P:somitogenesis"/>
    <property type="evidence" value="ECO:0007669"/>
    <property type="project" value="Ensembl"/>
</dbReference>
<dbReference type="CDD" id="cd18939">
    <property type="entry name" value="bHLH_TS_Msgn1"/>
    <property type="match status" value="1"/>
</dbReference>
<dbReference type="FunFam" id="4.10.280.10:FF:000056">
    <property type="entry name" value="mesogenin-1"/>
    <property type="match status" value="1"/>
</dbReference>
<dbReference type="Gene3D" id="4.10.280.10">
    <property type="entry name" value="Helix-loop-helix DNA-binding domain"/>
    <property type="match status" value="1"/>
</dbReference>
<dbReference type="InterPro" id="IPR011598">
    <property type="entry name" value="bHLH_dom"/>
</dbReference>
<dbReference type="InterPro" id="IPR036638">
    <property type="entry name" value="HLH_DNA-bd_sf"/>
</dbReference>
<dbReference type="InterPro" id="IPR040259">
    <property type="entry name" value="Mesogenin/MesP"/>
</dbReference>
<dbReference type="PANTHER" id="PTHR20937">
    <property type="entry name" value="IP14615P"/>
    <property type="match status" value="1"/>
</dbReference>
<dbReference type="PANTHER" id="PTHR20937:SF4">
    <property type="entry name" value="MESOGENIN-1"/>
    <property type="match status" value="1"/>
</dbReference>
<dbReference type="Pfam" id="PF00010">
    <property type="entry name" value="HLH"/>
    <property type="match status" value="1"/>
</dbReference>
<dbReference type="SMART" id="SM00353">
    <property type="entry name" value="HLH"/>
    <property type="match status" value="1"/>
</dbReference>
<dbReference type="SUPFAM" id="SSF47459">
    <property type="entry name" value="HLH, helix-loop-helix DNA-binding domain"/>
    <property type="match status" value="1"/>
</dbReference>
<dbReference type="PROSITE" id="PS50888">
    <property type="entry name" value="BHLH"/>
    <property type="match status" value="1"/>
</dbReference>
<comment type="function">
    <text evidence="1">Involved in specifying the paraxial, but not dorsal, mesoderm. May regulate the expression of T-box transcription factors required for mesoderm formation and differentiation (By similarity).</text>
</comment>
<comment type="interaction">
    <interactant intactId="EBI-11991020">
        <id>A6NI15</id>
    </interactant>
    <interactant intactId="EBI-11978055">
        <id>Q10567-3</id>
        <label>AP1B1</label>
    </interactant>
    <organismsDiffer>false</organismsDiffer>
    <experiments>3</experiments>
</comment>
<comment type="interaction">
    <interactant intactId="EBI-11991020">
        <id>A6NI15</id>
    </interactant>
    <interactant intactId="EBI-11990784">
        <id>A0A0C4DG94</id>
        <label>ATP11B</label>
    </interactant>
    <organismsDiffer>false</organismsDiffer>
    <experiments>3</experiments>
</comment>
<comment type="interaction">
    <interactant intactId="EBI-11991020">
        <id>A6NI15</id>
    </interactant>
    <interactant intactId="EBI-10826195">
        <id>Q6PJG6</id>
        <label>BRAT1</label>
    </interactant>
    <organismsDiffer>false</organismsDiffer>
    <experiments>3</experiments>
</comment>
<comment type="interaction">
    <interactant intactId="EBI-11991020">
        <id>A6NI15</id>
    </interactant>
    <interactant intactId="EBI-2548868">
        <id>P0C7W6</id>
        <label>CCDC172</label>
    </interactant>
    <organismsDiffer>false</organismsDiffer>
    <experiments>3</experiments>
</comment>
<comment type="interaction">
    <interactant intactId="EBI-11991020">
        <id>A6NI15</id>
    </interactant>
    <interactant intactId="EBI-1188472">
        <id>P78358</id>
        <label>CTAG1B</label>
    </interactant>
    <organismsDiffer>false</organismsDiffer>
    <experiments>3</experiments>
</comment>
<comment type="interaction">
    <interactant intactId="EBI-11991020">
        <id>A6NI15</id>
    </interactant>
    <interactant intactId="EBI-395638">
        <id>O14645</id>
        <label>DNALI1</label>
    </interactant>
    <organismsDiffer>false</organismsDiffer>
    <experiments>3</experiments>
</comment>
<comment type="interaction">
    <interactant intactId="EBI-11991020">
        <id>A6NI15</id>
    </interactant>
    <interactant intactId="EBI-6251402">
        <id>Q9UPT5-1</id>
        <label>EXOC7</label>
    </interactant>
    <organismsDiffer>false</organismsDiffer>
    <experiments>3</experiments>
</comment>
<comment type="interaction">
    <interactant intactId="EBI-11991020">
        <id>A6NI15</id>
    </interactant>
    <interactant intactId="EBI-712814">
        <id>P54257</id>
        <label>HAP1</label>
    </interactant>
    <organismsDiffer>false</organismsDiffer>
    <experiments>3</experiments>
</comment>
<comment type="interaction">
    <interactant intactId="EBI-11991020">
        <id>A6NI15</id>
    </interactant>
    <interactant intactId="EBI-1215527">
        <id>P41134</id>
        <label>ID1</label>
    </interactant>
    <organismsDiffer>false</organismsDiffer>
    <experiments>5</experiments>
</comment>
<comment type="interaction">
    <interactant intactId="EBI-11991020">
        <id>A6NI15</id>
    </interactant>
    <interactant intactId="EBI-713450">
        <id>Q02363</id>
        <label>ID2</label>
    </interactant>
    <organismsDiffer>false</organismsDiffer>
    <experiments>3</experiments>
</comment>
<comment type="interaction">
    <interactant intactId="EBI-11991020">
        <id>A6NI15</id>
    </interactant>
    <interactant intactId="EBI-1387094">
        <id>Q02535</id>
        <label>ID3</label>
    </interactant>
    <organismsDiffer>false</organismsDiffer>
    <experiments>3</experiments>
</comment>
<comment type="interaction">
    <interactant intactId="EBI-11991020">
        <id>A6NI15</id>
    </interactant>
    <interactant intactId="EBI-947015">
        <id>P24592</id>
        <label>IGFBP6</label>
    </interactant>
    <organismsDiffer>false</organismsDiffer>
    <experiments>3</experiments>
</comment>
<comment type="interaction">
    <interactant intactId="EBI-11991020">
        <id>A6NI15</id>
    </interactant>
    <interactant intactId="EBI-712105">
        <id>Q13352</id>
        <label>ITGB3BP</label>
    </interactant>
    <organismsDiffer>false</organismsDiffer>
    <experiments>3</experiments>
</comment>
<comment type="interaction">
    <interactant intactId="EBI-11991020">
        <id>A6NI15</id>
    </interactant>
    <interactant intactId="EBI-740738">
        <id>O95751</id>
        <label>LDOC1</label>
    </interactant>
    <organismsDiffer>false</organismsDiffer>
    <experiments>3</experiments>
</comment>
<comment type="interaction">
    <interactant intactId="EBI-11991020">
        <id>A6NI15</id>
    </interactant>
    <interactant intactId="EBI-1045155">
        <id>P43360</id>
        <label>MAGEA6</label>
    </interactant>
    <organismsDiffer>false</organismsDiffer>
    <experiments>3</experiments>
</comment>
<comment type="interaction">
    <interactant intactId="EBI-11991020">
        <id>A6NI15</id>
    </interactant>
    <interactant intactId="EBI-17491620">
        <id>P13349</id>
        <label>MYF5</label>
    </interactant>
    <organismsDiffer>false</organismsDiffer>
    <experiments>3</experiments>
</comment>
<comment type="interaction">
    <interactant intactId="EBI-11991020">
        <id>A6NI15</id>
    </interactant>
    <interactant intactId="EBI-13066228">
        <id>P24844-2</id>
        <label>MYL9</label>
    </interactant>
    <organismsDiffer>false</organismsDiffer>
    <experiments>3</experiments>
</comment>
<comment type="interaction">
    <interactant intactId="EBI-11991020">
        <id>A6NI15</id>
    </interactant>
    <interactant intactId="EBI-10172876">
        <id>Q7Z6G3-2</id>
        <label>NECAB2</label>
    </interactant>
    <organismsDiffer>false</organismsDiffer>
    <experiments>3</experiments>
</comment>
<comment type="interaction">
    <interactant intactId="EBI-11991020">
        <id>A6NI15</id>
    </interactant>
    <interactant intactId="EBI-18397963">
        <id>P0C6T2</id>
        <label>OST4</label>
    </interactant>
    <organismsDiffer>false</organismsDiffer>
    <experiments>3</experiments>
</comment>
<comment type="interaction">
    <interactant intactId="EBI-11991020">
        <id>A6NI15</id>
    </interactant>
    <interactant intactId="EBI-748621">
        <id>Q9UJW9</id>
        <label>SERTAD3</label>
    </interactant>
    <organismsDiffer>false</organismsDiffer>
    <experiments>3</experiments>
</comment>
<comment type="interaction">
    <interactant intactId="EBI-11991020">
        <id>A6NI15</id>
    </interactant>
    <interactant intactId="EBI-11952764">
        <id>Q99081-3</id>
        <label>TCF12</label>
    </interactant>
    <organismsDiffer>false</organismsDiffer>
    <experiments>3</experiments>
</comment>
<comment type="interaction">
    <interactant intactId="EBI-11991020">
        <id>A6NI15</id>
    </interactant>
    <interactant intactId="EBI-13636688">
        <id>P15884-3</id>
        <label>TCF4</label>
    </interactant>
    <organismsDiffer>false</organismsDiffer>
    <experiments>3</experiments>
</comment>
<comment type="interaction">
    <interactant intactId="EBI-11991020">
        <id>A6NI15</id>
    </interactant>
    <interactant intactId="EBI-11139477">
        <id>Q96N21</id>
        <label>TEPSIN</label>
    </interactant>
    <organismsDiffer>false</organismsDiffer>
    <experiments>3</experiments>
</comment>
<comment type="interaction">
    <interactant intactId="EBI-11991020">
        <id>A6NI15</id>
    </interactant>
    <interactant intactId="EBI-12090309">
        <id>Q9BXU0</id>
        <label>TEX12</label>
    </interactant>
    <organismsDiffer>false</organismsDiffer>
    <experiments>3</experiments>
</comment>
<comment type="interaction">
    <interactant intactId="EBI-11991020">
        <id>A6NI15</id>
    </interactant>
    <interactant intactId="EBI-359224">
        <id>Q13077</id>
        <label>TRAF1</label>
    </interactant>
    <organismsDiffer>false</organismsDiffer>
    <experiments>3</experiments>
</comment>
<comment type="interaction">
    <interactant intactId="EBI-11991020">
        <id>A6NI15</id>
    </interactant>
    <interactant intactId="EBI-8656864">
        <id>Q6PF05</id>
        <label>TTC23L</label>
    </interactant>
    <organismsDiffer>false</organismsDiffer>
    <experiments>5</experiments>
</comment>
<comment type="interaction">
    <interactant intactId="EBI-11991020">
        <id>A6NI15</id>
    </interactant>
    <interactant intactId="EBI-12030590">
        <id>Q9H0C1</id>
        <label>ZMYND12</label>
    </interactant>
    <organismsDiffer>false</organismsDiffer>
    <experiments>5</experiments>
</comment>
<comment type="interaction">
    <interactant intactId="EBI-11991020">
        <id>A6NI15</id>
    </interactant>
    <interactant intactId="EBI-1001132">
        <id>O95229</id>
        <label>ZWINT</label>
    </interactant>
    <organismsDiffer>false</organismsDiffer>
    <experiments>3</experiments>
</comment>
<comment type="subcellular location">
    <subcellularLocation>
        <location evidence="2">Nucleus</location>
    </subcellularLocation>
</comment>
<protein>
    <recommendedName>
        <fullName>Mesogenin-1</fullName>
    </recommendedName>
    <alternativeName>
        <fullName>Paraxial mesoderm-specific mesogenin1</fullName>
    </alternativeName>
    <alternativeName>
        <fullName>pMesogenin1</fullName>
        <shortName>pMsgn1</shortName>
    </alternativeName>
</protein>
<accession>A6NI15</accession>
<keyword id="KW-0217">Developmental protein</keyword>
<keyword id="KW-0221">Differentiation</keyword>
<keyword id="KW-0238">DNA-binding</keyword>
<keyword id="KW-0539">Nucleus</keyword>
<keyword id="KW-1185">Reference proteome</keyword>
<keyword id="KW-0804">Transcription</keyword>
<keyword id="KW-0805">Transcription regulation</keyword>
<organism>
    <name type="scientific">Homo sapiens</name>
    <name type="common">Human</name>
    <dbReference type="NCBI Taxonomy" id="9606"/>
    <lineage>
        <taxon>Eukaryota</taxon>
        <taxon>Metazoa</taxon>
        <taxon>Chordata</taxon>
        <taxon>Craniata</taxon>
        <taxon>Vertebrata</taxon>
        <taxon>Euteleostomi</taxon>
        <taxon>Mammalia</taxon>
        <taxon>Eutheria</taxon>
        <taxon>Euarchontoglires</taxon>
        <taxon>Primates</taxon>
        <taxon>Haplorrhini</taxon>
        <taxon>Catarrhini</taxon>
        <taxon>Hominidae</taxon>
        <taxon>Homo</taxon>
    </lineage>
</organism>
<proteinExistence type="evidence at protein level"/>
<feature type="chain" id="PRO_0000330028" description="Mesogenin-1">
    <location>
        <begin position="1"/>
        <end position="193"/>
    </location>
</feature>
<feature type="domain" description="bHLH" evidence="2">
    <location>
        <begin position="124"/>
        <end position="178"/>
    </location>
</feature>
<feature type="region of interest" description="Disordered" evidence="3">
    <location>
        <begin position="34"/>
        <end position="59"/>
    </location>
</feature>
<feature type="compositionally biased region" description="Low complexity" evidence="3">
    <location>
        <begin position="40"/>
        <end position="59"/>
    </location>
</feature>
<feature type="sequence variant" id="VAR_061259" description="In dbSNP:rs34069439.">
    <original>E</original>
    <variation>D</variation>
    <location>
        <position position="80"/>
    </location>
</feature>
<feature type="sequence variant" id="VAR_061260" description="In dbSNP:rs35858730.">
    <original>H</original>
    <variation>Y</variation>
    <location>
        <position position="104"/>
    </location>
</feature>